<protein>
    <recommendedName>
        <fullName evidence="1">ATP synthase subunit alpha, chloroplastic</fullName>
        <ecNumber evidence="1">7.1.2.2</ecNumber>
    </recommendedName>
    <alternativeName>
        <fullName evidence="1">ATP synthase F1 sector subunit alpha</fullName>
    </alternativeName>
    <alternativeName>
        <fullName evidence="1">F-ATPase subunit alpha</fullName>
    </alternativeName>
</protein>
<sequence>MATLRVDEIHKILRERIEQYNRKVGIENIGRVVQVGDGIARIIGLGEIMSGELVEFAEGTRGIALNLESKNVGIVLMGDGLMIQEGSFVKATGRIAQIPVSEAYLGRVINALAKPIDGRGEIVASESRLIESPAPGIISRRSVYEPLQTGLIAIDSMIPIGRGQRELIIGDRQTGKTAVATDTILNQKGQDVICVYVAIGQRASSVAQVVTTFHEEGAMEYTIVVAEMADSPATLQYLAPYTGAALAEYFMYRERHTLIIYDDLSKQAQAYRQMSLLLRRPPGREAYPGDVFYLHSRLLERAAKLNSLLGEGSMTALPIVETQSGDVSAYIPTNVISITDGQIFLSADLFNAGIRPAINVGISVSRVGSAAQIKAMKQVAGKSKLELAQFAELQAFAQFASALDKTSQNQLARGRRLRELLKQSQANPLPVEEQIATIYIGTRGYLDSLEIGQVKKFLDELRKHLKDTKPQFQEIISSSKTFTEEAEILLKEAIQEQLERFSLQEQT</sequence>
<feature type="chain" id="PRO_0000144386" description="ATP synthase subunit alpha, chloroplastic">
    <location>
        <begin position="1"/>
        <end position="507"/>
    </location>
</feature>
<feature type="binding site" evidence="1">
    <location>
        <begin position="170"/>
        <end position="177"/>
    </location>
    <ligand>
        <name>ATP</name>
        <dbReference type="ChEBI" id="CHEBI:30616"/>
    </ligand>
</feature>
<feature type="site" description="Required for activity" evidence="1">
    <location>
        <position position="363"/>
    </location>
</feature>
<keyword id="KW-0066">ATP synthesis</keyword>
<keyword id="KW-0067">ATP-binding</keyword>
<keyword id="KW-0139">CF(1)</keyword>
<keyword id="KW-0150">Chloroplast</keyword>
<keyword id="KW-0375">Hydrogen ion transport</keyword>
<keyword id="KW-0406">Ion transport</keyword>
<keyword id="KW-0472">Membrane</keyword>
<keyword id="KW-0547">Nucleotide-binding</keyword>
<keyword id="KW-0934">Plastid</keyword>
<keyword id="KW-0793">Thylakoid</keyword>
<keyword id="KW-1278">Translocase</keyword>
<keyword id="KW-0813">Transport</keyword>
<proteinExistence type="inferred from homology"/>
<geneLocation type="chloroplast"/>
<organism>
    <name type="scientific">Oryza sativa</name>
    <name type="common">Rice</name>
    <dbReference type="NCBI Taxonomy" id="4530"/>
    <lineage>
        <taxon>Eukaryota</taxon>
        <taxon>Viridiplantae</taxon>
        <taxon>Streptophyta</taxon>
        <taxon>Embryophyta</taxon>
        <taxon>Tracheophyta</taxon>
        <taxon>Spermatophyta</taxon>
        <taxon>Magnoliopsida</taxon>
        <taxon>Liliopsida</taxon>
        <taxon>Poales</taxon>
        <taxon>Poaceae</taxon>
        <taxon>BOP clade</taxon>
        <taxon>Oryzoideae</taxon>
        <taxon>Oryzeae</taxon>
        <taxon>Oryzinae</taxon>
        <taxon>Oryza</taxon>
    </lineage>
</organism>
<evidence type="ECO:0000255" key="1">
    <source>
        <dbReference type="HAMAP-Rule" id="MF_01346"/>
    </source>
</evidence>
<evidence type="ECO:0000305" key="2"/>
<gene>
    <name evidence="1" type="primary">atpA</name>
    <name type="ORF">PA046</name>
</gene>
<reference key="1">
    <citation type="journal article" date="2004" name="Plant Physiol.">
        <title>A comparison of rice chloroplast genomes.</title>
        <authorList>
            <person name="Tang J."/>
            <person name="Xia H."/>
            <person name="Cao M."/>
            <person name="Zhang X."/>
            <person name="Zeng W."/>
            <person name="Hu S."/>
            <person name="Tong W."/>
            <person name="Wang J."/>
            <person name="Wang J."/>
            <person name="Yu J."/>
            <person name="Yang H."/>
            <person name="Zhu L."/>
        </authorList>
    </citation>
    <scope>NUCLEOTIDE SEQUENCE [LARGE SCALE GENOMIC DNA]</scope>
    <source>
        <strain>cv. PA64s</strain>
    </source>
</reference>
<comment type="function">
    <text>Produces ATP from ADP in the presence of a proton gradient across the membrane. The alpha chain is a regulatory subunit.</text>
</comment>
<comment type="catalytic activity">
    <reaction evidence="1">
        <text>ATP + H2O + 4 H(+)(in) = ADP + phosphate + 5 H(+)(out)</text>
        <dbReference type="Rhea" id="RHEA:57720"/>
        <dbReference type="ChEBI" id="CHEBI:15377"/>
        <dbReference type="ChEBI" id="CHEBI:15378"/>
        <dbReference type="ChEBI" id="CHEBI:30616"/>
        <dbReference type="ChEBI" id="CHEBI:43474"/>
        <dbReference type="ChEBI" id="CHEBI:456216"/>
        <dbReference type="EC" id="7.1.2.2"/>
    </reaction>
</comment>
<comment type="subunit">
    <text evidence="1">F-type ATPases have 2 components, CF(1) - the catalytic core - and CF(0) - the membrane proton channel. CF(1) has five subunits: alpha(3), beta(3), gamma(1), delta(1), epsilon(1). CF(0) has four main subunits: a, b, b' and c.</text>
</comment>
<comment type="subcellular location">
    <subcellularLocation>
        <location evidence="1">Plastid</location>
        <location evidence="1">Chloroplast thylakoid membrane</location>
        <topology evidence="1">Peripheral membrane protein</topology>
    </subcellularLocation>
</comment>
<comment type="similarity">
    <text evidence="1">Belongs to the ATPase alpha/beta chains family.</text>
</comment>
<comment type="sequence caution" evidence="2">
    <conflict type="erroneous initiation">
        <sequence resource="EMBL-CDS" id="AAS46181"/>
    </conflict>
</comment>
<accession>P0C2Z4</accession>
<accession>P12084</accession>
<accession>Q6QY13</accession>
<accession>Q6QY77</accession>
<name>ATPA_ORYSA</name>
<dbReference type="EC" id="7.1.2.2" evidence="1"/>
<dbReference type="EMBL" id="AY522331">
    <property type="protein sequence ID" value="AAS46181.1"/>
    <property type="status" value="ALT_INIT"/>
    <property type="molecule type" value="Genomic_DNA"/>
</dbReference>
<dbReference type="RefSeq" id="YP_009305301.1">
    <property type="nucleotide sequence ID" value="NC_031333.1"/>
</dbReference>
<dbReference type="SMR" id="P0C2Z4"/>
<dbReference type="GeneID" id="29141358"/>
<dbReference type="ExpressionAtlas" id="P0C2Z4">
    <property type="expression patterns" value="baseline and differential"/>
</dbReference>
<dbReference type="GO" id="GO:0009535">
    <property type="term" value="C:chloroplast thylakoid membrane"/>
    <property type="evidence" value="ECO:0007669"/>
    <property type="project" value="UniProtKB-SubCell"/>
</dbReference>
<dbReference type="GO" id="GO:0009536">
    <property type="term" value="C:plastid"/>
    <property type="evidence" value="ECO:0000305"/>
    <property type="project" value="Gramene"/>
</dbReference>
<dbReference type="GO" id="GO:0045259">
    <property type="term" value="C:proton-transporting ATP synthase complex"/>
    <property type="evidence" value="ECO:0007669"/>
    <property type="project" value="UniProtKB-KW"/>
</dbReference>
<dbReference type="GO" id="GO:0043531">
    <property type="term" value="F:ADP binding"/>
    <property type="evidence" value="ECO:0007669"/>
    <property type="project" value="TreeGrafter"/>
</dbReference>
<dbReference type="GO" id="GO:0005524">
    <property type="term" value="F:ATP binding"/>
    <property type="evidence" value="ECO:0007669"/>
    <property type="project" value="UniProtKB-UniRule"/>
</dbReference>
<dbReference type="GO" id="GO:0046933">
    <property type="term" value="F:proton-transporting ATP synthase activity, rotational mechanism"/>
    <property type="evidence" value="ECO:0007669"/>
    <property type="project" value="UniProtKB-UniRule"/>
</dbReference>
<dbReference type="CDD" id="cd18113">
    <property type="entry name" value="ATP-synt_F1_alpha_C"/>
    <property type="match status" value="1"/>
</dbReference>
<dbReference type="CDD" id="cd18116">
    <property type="entry name" value="ATP-synt_F1_alpha_N"/>
    <property type="match status" value="1"/>
</dbReference>
<dbReference type="CDD" id="cd01132">
    <property type="entry name" value="F1-ATPase_alpha_CD"/>
    <property type="match status" value="1"/>
</dbReference>
<dbReference type="FunFam" id="1.20.150.20:FF:000001">
    <property type="entry name" value="ATP synthase subunit alpha"/>
    <property type="match status" value="1"/>
</dbReference>
<dbReference type="FunFam" id="2.40.30.20:FF:000001">
    <property type="entry name" value="ATP synthase subunit alpha"/>
    <property type="match status" value="1"/>
</dbReference>
<dbReference type="FunFam" id="3.40.50.300:FF:000002">
    <property type="entry name" value="ATP synthase subunit alpha"/>
    <property type="match status" value="1"/>
</dbReference>
<dbReference type="Gene3D" id="2.40.30.20">
    <property type="match status" value="1"/>
</dbReference>
<dbReference type="Gene3D" id="1.20.150.20">
    <property type="entry name" value="ATP synthase alpha/beta chain, C-terminal domain"/>
    <property type="match status" value="1"/>
</dbReference>
<dbReference type="Gene3D" id="3.40.50.300">
    <property type="entry name" value="P-loop containing nucleotide triphosphate hydrolases"/>
    <property type="match status" value="1"/>
</dbReference>
<dbReference type="HAMAP" id="MF_01346">
    <property type="entry name" value="ATP_synth_alpha_bact"/>
    <property type="match status" value="1"/>
</dbReference>
<dbReference type="InterPro" id="IPR023366">
    <property type="entry name" value="ATP_synth_asu-like_sf"/>
</dbReference>
<dbReference type="InterPro" id="IPR000793">
    <property type="entry name" value="ATP_synth_asu_C"/>
</dbReference>
<dbReference type="InterPro" id="IPR038376">
    <property type="entry name" value="ATP_synth_asu_C_sf"/>
</dbReference>
<dbReference type="InterPro" id="IPR033732">
    <property type="entry name" value="ATP_synth_F1_a_nt-bd_dom"/>
</dbReference>
<dbReference type="InterPro" id="IPR005294">
    <property type="entry name" value="ATP_synth_F1_asu"/>
</dbReference>
<dbReference type="InterPro" id="IPR020003">
    <property type="entry name" value="ATPase_a/bsu_AS"/>
</dbReference>
<dbReference type="InterPro" id="IPR004100">
    <property type="entry name" value="ATPase_F1/V1/A1_a/bsu_N"/>
</dbReference>
<dbReference type="InterPro" id="IPR036121">
    <property type="entry name" value="ATPase_F1/V1/A1_a/bsu_N_sf"/>
</dbReference>
<dbReference type="InterPro" id="IPR000194">
    <property type="entry name" value="ATPase_F1/V1/A1_a/bsu_nucl-bd"/>
</dbReference>
<dbReference type="InterPro" id="IPR027417">
    <property type="entry name" value="P-loop_NTPase"/>
</dbReference>
<dbReference type="NCBIfam" id="TIGR00962">
    <property type="entry name" value="atpA"/>
    <property type="match status" value="1"/>
</dbReference>
<dbReference type="NCBIfam" id="NF009884">
    <property type="entry name" value="PRK13343.1"/>
    <property type="match status" value="1"/>
</dbReference>
<dbReference type="PANTHER" id="PTHR48082:SF6">
    <property type="entry name" value="ATP SYNTHASE SUBUNIT ALPHA, CHLOROPLASTIC"/>
    <property type="match status" value="1"/>
</dbReference>
<dbReference type="PANTHER" id="PTHR48082">
    <property type="entry name" value="ATP SYNTHASE SUBUNIT ALPHA, MITOCHONDRIAL"/>
    <property type="match status" value="1"/>
</dbReference>
<dbReference type="Pfam" id="PF00006">
    <property type="entry name" value="ATP-synt_ab"/>
    <property type="match status" value="1"/>
</dbReference>
<dbReference type="Pfam" id="PF00306">
    <property type="entry name" value="ATP-synt_ab_C"/>
    <property type="match status" value="1"/>
</dbReference>
<dbReference type="Pfam" id="PF02874">
    <property type="entry name" value="ATP-synt_ab_N"/>
    <property type="match status" value="1"/>
</dbReference>
<dbReference type="PIRSF" id="PIRSF039088">
    <property type="entry name" value="F_ATPase_subunit_alpha"/>
    <property type="match status" value="1"/>
</dbReference>
<dbReference type="SUPFAM" id="SSF47917">
    <property type="entry name" value="C-terminal domain of alpha and beta subunits of F1 ATP synthase"/>
    <property type="match status" value="1"/>
</dbReference>
<dbReference type="SUPFAM" id="SSF50615">
    <property type="entry name" value="N-terminal domain of alpha and beta subunits of F1 ATP synthase"/>
    <property type="match status" value="1"/>
</dbReference>
<dbReference type="SUPFAM" id="SSF52540">
    <property type="entry name" value="P-loop containing nucleoside triphosphate hydrolases"/>
    <property type="match status" value="1"/>
</dbReference>
<dbReference type="PROSITE" id="PS00152">
    <property type="entry name" value="ATPASE_ALPHA_BETA"/>
    <property type="match status" value="1"/>
</dbReference>